<reference key="1">
    <citation type="submission" date="1997-03" db="EMBL/GenBank/DDBJ databases">
        <title>A 148 kbp sequence of the region between 35 and 47 degree of the Bacillus subtilis genome.</title>
        <authorList>
            <person name="Kasahara Y."/>
            <person name="Nakai S."/>
            <person name="Lee S."/>
            <person name="Sadaie Y."/>
            <person name="Ogasawara N."/>
        </authorList>
    </citation>
    <scope>NUCLEOTIDE SEQUENCE [GENOMIC DNA]</scope>
    <source>
        <strain>168</strain>
    </source>
</reference>
<reference key="2">
    <citation type="journal article" date="1997" name="Nature">
        <title>The complete genome sequence of the Gram-positive bacterium Bacillus subtilis.</title>
        <authorList>
            <person name="Kunst F."/>
            <person name="Ogasawara N."/>
            <person name="Moszer I."/>
            <person name="Albertini A.M."/>
            <person name="Alloni G."/>
            <person name="Azevedo V."/>
            <person name="Bertero M.G."/>
            <person name="Bessieres P."/>
            <person name="Bolotin A."/>
            <person name="Borchert S."/>
            <person name="Borriss R."/>
            <person name="Boursier L."/>
            <person name="Brans A."/>
            <person name="Braun M."/>
            <person name="Brignell S.C."/>
            <person name="Bron S."/>
            <person name="Brouillet S."/>
            <person name="Bruschi C.V."/>
            <person name="Caldwell B."/>
            <person name="Capuano V."/>
            <person name="Carter N.M."/>
            <person name="Choi S.-K."/>
            <person name="Codani J.-J."/>
            <person name="Connerton I.F."/>
            <person name="Cummings N.J."/>
            <person name="Daniel R.A."/>
            <person name="Denizot F."/>
            <person name="Devine K.M."/>
            <person name="Duesterhoeft A."/>
            <person name="Ehrlich S.D."/>
            <person name="Emmerson P.T."/>
            <person name="Entian K.-D."/>
            <person name="Errington J."/>
            <person name="Fabret C."/>
            <person name="Ferrari E."/>
            <person name="Foulger D."/>
            <person name="Fritz C."/>
            <person name="Fujita M."/>
            <person name="Fujita Y."/>
            <person name="Fuma S."/>
            <person name="Galizzi A."/>
            <person name="Galleron N."/>
            <person name="Ghim S.-Y."/>
            <person name="Glaser P."/>
            <person name="Goffeau A."/>
            <person name="Golightly E.J."/>
            <person name="Grandi G."/>
            <person name="Guiseppi G."/>
            <person name="Guy B.J."/>
            <person name="Haga K."/>
            <person name="Haiech J."/>
            <person name="Harwood C.R."/>
            <person name="Henaut A."/>
            <person name="Hilbert H."/>
            <person name="Holsappel S."/>
            <person name="Hosono S."/>
            <person name="Hullo M.-F."/>
            <person name="Itaya M."/>
            <person name="Jones L.-M."/>
            <person name="Joris B."/>
            <person name="Karamata D."/>
            <person name="Kasahara Y."/>
            <person name="Klaerr-Blanchard M."/>
            <person name="Klein C."/>
            <person name="Kobayashi Y."/>
            <person name="Koetter P."/>
            <person name="Koningstein G."/>
            <person name="Krogh S."/>
            <person name="Kumano M."/>
            <person name="Kurita K."/>
            <person name="Lapidus A."/>
            <person name="Lardinois S."/>
            <person name="Lauber J."/>
            <person name="Lazarevic V."/>
            <person name="Lee S.-M."/>
            <person name="Levine A."/>
            <person name="Liu H."/>
            <person name="Masuda S."/>
            <person name="Mauel C."/>
            <person name="Medigue C."/>
            <person name="Medina N."/>
            <person name="Mellado R.P."/>
            <person name="Mizuno M."/>
            <person name="Moestl D."/>
            <person name="Nakai S."/>
            <person name="Noback M."/>
            <person name="Noone D."/>
            <person name="O'Reilly M."/>
            <person name="Ogawa K."/>
            <person name="Ogiwara A."/>
            <person name="Oudega B."/>
            <person name="Park S.-H."/>
            <person name="Parro V."/>
            <person name="Pohl T.M."/>
            <person name="Portetelle D."/>
            <person name="Porwollik S."/>
            <person name="Prescott A.M."/>
            <person name="Presecan E."/>
            <person name="Pujic P."/>
            <person name="Purnelle B."/>
            <person name="Rapoport G."/>
            <person name="Rey M."/>
            <person name="Reynolds S."/>
            <person name="Rieger M."/>
            <person name="Rivolta C."/>
            <person name="Rocha E."/>
            <person name="Roche B."/>
            <person name="Rose M."/>
            <person name="Sadaie Y."/>
            <person name="Sato T."/>
            <person name="Scanlan E."/>
            <person name="Schleich S."/>
            <person name="Schroeter R."/>
            <person name="Scoffone F."/>
            <person name="Sekiguchi J."/>
            <person name="Sekowska A."/>
            <person name="Seror S.J."/>
            <person name="Serror P."/>
            <person name="Shin B.-S."/>
            <person name="Soldo B."/>
            <person name="Sorokin A."/>
            <person name="Tacconi E."/>
            <person name="Takagi T."/>
            <person name="Takahashi H."/>
            <person name="Takemaru K."/>
            <person name="Takeuchi M."/>
            <person name="Tamakoshi A."/>
            <person name="Tanaka T."/>
            <person name="Terpstra P."/>
            <person name="Tognoni A."/>
            <person name="Tosato V."/>
            <person name="Uchiyama S."/>
            <person name="Vandenbol M."/>
            <person name="Vannier F."/>
            <person name="Vassarotti A."/>
            <person name="Viari A."/>
            <person name="Wambutt R."/>
            <person name="Wedler E."/>
            <person name="Wedler H."/>
            <person name="Weitzenegger T."/>
            <person name="Winters P."/>
            <person name="Wipat A."/>
            <person name="Yamamoto H."/>
            <person name="Yamane K."/>
            <person name="Yasumoto K."/>
            <person name="Yata K."/>
            <person name="Yoshida K."/>
            <person name="Yoshikawa H.-F."/>
            <person name="Zumstein E."/>
            <person name="Yoshikawa H."/>
            <person name="Danchin A."/>
        </authorList>
    </citation>
    <scope>NUCLEOTIDE SEQUENCE [LARGE SCALE GENOMIC DNA]</scope>
    <source>
        <strain>168</strain>
    </source>
</reference>
<gene>
    <name type="primary">ydfG</name>
    <name type="ordered locus">BSU05400</name>
</gene>
<accession>P96684</accession>
<accession>Q797G7</accession>
<protein>
    <recommendedName>
        <fullName>Uncharacterized protein YdfG</fullName>
    </recommendedName>
</protein>
<dbReference type="EMBL" id="AB001488">
    <property type="protein sequence ID" value="BAA19374.1"/>
    <property type="molecule type" value="Genomic_DNA"/>
</dbReference>
<dbReference type="EMBL" id="AL009126">
    <property type="protein sequence ID" value="CAB12347.1"/>
    <property type="molecule type" value="Genomic_DNA"/>
</dbReference>
<dbReference type="PIR" id="E69780">
    <property type="entry name" value="E69780"/>
</dbReference>
<dbReference type="RefSeq" id="NP_388421.1">
    <property type="nucleotide sequence ID" value="NC_000964.3"/>
</dbReference>
<dbReference type="RefSeq" id="WP_003242768.1">
    <property type="nucleotide sequence ID" value="NZ_OZ025638.1"/>
</dbReference>
<dbReference type="SMR" id="P96684"/>
<dbReference type="FunCoup" id="P96684">
    <property type="interactions" value="122"/>
</dbReference>
<dbReference type="STRING" id="224308.BSU05400"/>
<dbReference type="PaxDb" id="224308-BSU05400"/>
<dbReference type="EnsemblBacteria" id="CAB12347">
    <property type="protein sequence ID" value="CAB12347"/>
    <property type="gene ID" value="BSU_05400"/>
</dbReference>
<dbReference type="GeneID" id="938081"/>
<dbReference type="KEGG" id="bsu:BSU05400"/>
<dbReference type="PATRIC" id="fig|224308.179.peg.577"/>
<dbReference type="eggNOG" id="COG2128">
    <property type="taxonomic scope" value="Bacteria"/>
</dbReference>
<dbReference type="InParanoid" id="P96684"/>
<dbReference type="OrthoDB" id="9801997at2"/>
<dbReference type="PhylomeDB" id="P96684"/>
<dbReference type="BioCyc" id="BSUB:BSU05400-MONOMER"/>
<dbReference type="Proteomes" id="UP000001570">
    <property type="component" value="Chromosome"/>
</dbReference>
<dbReference type="GO" id="GO:0051920">
    <property type="term" value="F:peroxiredoxin activity"/>
    <property type="evidence" value="ECO:0007669"/>
    <property type="project" value="InterPro"/>
</dbReference>
<dbReference type="Gene3D" id="1.20.1290.10">
    <property type="entry name" value="AhpD-like"/>
    <property type="match status" value="1"/>
</dbReference>
<dbReference type="InterPro" id="IPR029032">
    <property type="entry name" value="AhpD-like"/>
</dbReference>
<dbReference type="InterPro" id="IPR004675">
    <property type="entry name" value="AhpD_core"/>
</dbReference>
<dbReference type="InterPro" id="IPR003779">
    <property type="entry name" value="CMD-like"/>
</dbReference>
<dbReference type="NCBIfam" id="TIGR00778">
    <property type="entry name" value="ahpD_dom"/>
    <property type="match status" value="1"/>
</dbReference>
<dbReference type="PANTHER" id="PTHR34846">
    <property type="entry name" value="4-CARBOXYMUCONOLACTONE DECARBOXYLASE FAMILY PROTEIN (AFU_ORTHOLOGUE AFUA_6G11590)"/>
    <property type="match status" value="1"/>
</dbReference>
<dbReference type="PANTHER" id="PTHR34846:SF10">
    <property type="entry name" value="CYTOPLASMIC PROTEIN"/>
    <property type="match status" value="1"/>
</dbReference>
<dbReference type="Pfam" id="PF02627">
    <property type="entry name" value="CMD"/>
    <property type="match status" value="1"/>
</dbReference>
<dbReference type="SUPFAM" id="SSF69118">
    <property type="entry name" value="AhpD-like"/>
    <property type="match status" value="1"/>
</dbReference>
<feature type="chain" id="PRO_0000361089" description="Uncharacterized protein YdfG">
    <location>
        <begin position="1"/>
        <end position="147"/>
    </location>
</feature>
<proteinExistence type="predicted"/>
<sequence length="147" mass="17315">MSQRVSYYEIAPEGMKIMMDMEKYTKQSSINRTTRELIKIRVSQMNGCAFCIDMHTSDARKMGETEQRIYCLHAWNECDFYSPEEKAALELSEHITLIPSKRVPDELYHRVREHYDEEQYVDLVLIINQINSWNRISIAMGNRAASK</sequence>
<name>YDFG_BACSU</name>
<organism>
    <name type="scientific">Bacillus subtilis (strain 168)</name>
    <dbReference type="NCBI Taxonomy" id="224308"/>
    <lineage>
        <taxon>Bacteria</taxon>
        <taxon>Bacillati</taxon>
        <taxon>Bacillota</taxon>
        <taxon>Bacilli</taxon>
        <taxon>Bacillales</taxon>
        <taxon>Bacillaceae</taxon>
        <taxon>Bacillus</taxon>
    </lineage>
</organism>
<keyword id="KW-1185">Reference proteome</keyword>